<accession>O23487</accession>
<dbReference type="EMBL" id="AF251688">
    <property type="protein sequence ID" value="AAL55710.1"/>
    <property type="molecule type" value="mRNA"/>
</dbReference>
<dbReference type="EMBL" id="Z97341">
    <property type="protein sequence ID" value="CAB10419.1"/>
    <property type="molecule type" value="Genomic_DNA"/>
</dbReference>
<dbReference type="EMBL" id="AL161544">
    <property type="protein sequence ID" value="CAB78685.1"/>
    <property type="molecule type" value="Genomic_DNA"/>
</dbReference>
<dbReference type="EMBL" id="CP002687">
    <property type="protein sequence ID" value="AEE83747.1"/>
    <property type="molecule type" value="Genomic_DNA"/>
</dbReference>
<dbReference type="EMBL" id="AF428368">
    <property type="protein sequence ID" value="AAL16298.1"/>
    <property type="molecule type" value="mRNA"/>
</dbReference>
<dbReference type="EMBL" id="AY057626">
    <property type="protein sequence ID" value="AAL15257.1"/>
    <property type="molecule type" value="mRNA"/>
</dbReference>
<dbReference type="EMBL" id="BT002301">
    <property type="protein sequence ID" value="AAN73298.1"/>
    <property type="molecule type" value="mRNA"/>
</dbReference>
<dbReference type="PIR" id="A71431">
    <property type="entry name" value="A71431"/>
</dbReference>
<dbReference type="RefSeq" id="NP_193376.1">
    <property type="nucleotide sequence ID" value="NM_117738.3"/>
</dbReference>
<dbReference type="SMR" id="O23487"/>
<dbReference type="BioGRID" id="12630">
    <property type="interactions" value="17"/>
</dbReference>
<dbReference type="FunCoup" id="O23487">
    <property type="interactions" value="1077"/>
</dbReference>
<dbReference type="IntAct" id="O23487">
    <property type="interactions" value="9"/>
</dbReference>
<dbReference type="STRING" id="3702.O23487"/>
<dbReference type="iPTMnet" id="O23487"/>
<dbReference type="PaxDb" id="3702-AT4G16430.1"/>
<dbReference type="ProteomicsDB" id="240682"/>
<dbReference type="EnsemblPlants" id="AT4G16430.1">
    <property type="protein sequence ID" value="AT4G16430.1"/>
    <property type="gene ID" value="AT4G16430"/>
</dbReference>
<dbReference type="GeneID" id="827337"/>
<dbReference type="Gramene" id="AT4G16430.1">
    <property type="protein sequence ID" value="AT4G16430.1"/>
    <property type="gene ID" value="AT4G16430"/>
</dbReference>
<dbReference type="KEGG" id="ath:AT4G16430"/>
<dbReference type="Araport" id="AT4G16430"/>
<dbReference type="TAIR" id="AT4G16430">
    <property type="gene designation" value="JAM3"/>
</dbReference>
<dbReference type="eggNOG" id="ENOG502QUEW">
    <property type="taxonomic scope" value="Eukaryota"/>
</dbReference>
<dbReference type="HOGENOM" id="CLU_021132_0_1_1"/>
<dbReference type="InParanoid" id="O23487"/>
<dbReference type="OMA" id="ALCKIVE"/>
<dbReference type="PhylomeDB" id="O23487"/>
<dbReference type="PRO" id="PR:O23487"/>
<dbReference type="Proteomes" id="UP000006548">
    <property type="component" value="Chromosome 4"/>
</dbReference>
<dbReference type="ExpressionAtlas" id="O23487">
    <property type="expression patterns" value="baseline and differential"/>
</dbReference>
<dbReference type="GO" id="GO:0005634">
    <property type="term" value="C:nucleus"/>
    <property type="evidence" value="ECO:0000314"/>
    <property type="project" value="TAIR"/>
</dbReference>
<dbReference type="GO" id="GO:0003677">
    <property type="term" value="F:DNA binding"/>
    <property type="evidence" value="ECO:0007669"/>
    <property type="project" value="UniProtKB-KW"/>
</dbReference>
<dbReference type="GO" id="GO:0003700">
    <property type="term" value="F:DNA-binding transcription factor activity"/>
    <property type="evidence" value="ECO:0000250"/>
    <property type="project" value="TAIR"/>
</dbReference>
<dbReference type="GO" id="GO:0046983">
    <property type="term" value="F:protein dimerization activity"/>
    <property type="evidence" value="ECO:0007669"/>
    <property type="project" value="InterPro"/>
</dbReference>
<dbReference type="GO" id="GO:0010629">
    <property type="term" value="P:negative regulation of gene expression"/>
    <property type="evidence" value="ECO:0000316"/>
    <property type="project" value="TAIR"/>
</dbReference>
<dbReference type="GO" id="GO:0006355">
    <property type="term" value="P:regulation of DNA-templated transcription"/>
    <property type="evidence" value="ECO:0000304"/>
    <property type="project" value="TAIR"/>
</dbReference>
<dbReference type="CDD" id="cd11449">
    <property type="entry name" value="bHLH_AtAIB_like"/>
    <property type="match status" value="1"/>
</dbReference>
<dbReference type="FunFam" id="4.10.280.10:FF:000078">
    <property type="entry name" value="Transcription factor bHLH13"/>
    <property type="match status" value="1"/>
</dbReference>
<dbReference type="Gene3D" id="4.10.280.10">
    <property type="entry name" value="Helix-loop-helix DNA-binding domain"/>
    <property type="match status" value="1"/>
</dbReference>
<dbReference type="InterPro" id="IPR045084">
    <property type="entry name" value="AIB/MYC-like"/>
</dbReference>
<dbReference type="InterPro" id="IPR011598">
    <property type="entry name" value="bHLH_dom"/>
</dbReference>
<dbReference type="InterPro" id="IPR036638">
    <property type="entry name" value="HLH_DNA-bd_sf"/>
</dbReference>
<dbReference type="InterPro" id="IPR025610">
    <property type="entry name" value="MYC/MYB_N"/>
</dbReference>
<dbReference type="PANTHER" id="PTHR11514">
    <property type="entry name" value="MYC"/>
    <property type="match status" value="1"/>
</dbReference>
<dbReference type="PANTHER" id="PTHR11514:SF53">
    <property type="entry name" value="TRANSCRIPTION FACTOR BHLH3"/>
    <property type="match status" value="1"/>
</dbReference>
<dbReference type="Pfam" id="PF14215">
    <property type="entry name" value="bHLH-MYC_N"/>
    <property type="match status" value="1"/>
</dbReference>
<dbReference type="Pfam" id="PF00010">
    <property type="entry name" value="HLH"/>
    <property type="match status" value="1"/>
</dbReference>
<dbReference type="SMART" id="SM00353">
    <property type="entry name" value="HLH"/>
    <property type="match status" value="1"/>
</dbReference>
<dbReference type="SUPFAM" id="SSF47459">
    <property type="entry name" value="HLH, helix-loop-helix DNA-binding domain"/>
    <property type="match status" value="1"/>
</dbReference>
<dbReference type="PROSITE" id="PS50888">
    <property type="entry name" value="BHLH"/>
    <property type="match status" value="1"/>
</dbReference>
<sequence length="467" mass="52234">MGQKFWENQEDRAMVESTIGSEACDFFISTASASNTALSKLVSPPSDSNLQQGLRHVVEGSDWDYALFWLASNVNSSDGCVLIWGDGHCRVKKGASGEDYSQQDEIKRRVLRKLHLSFVGSDEDHRLVKSGALTDLDMFYLASLYFSFRCDTNKYGPAGTYVSGKPLWAADLPSCLSYYRVRSFLARSAGFQTVLSVPVNSGVVELGSLRHIPEDKSVIEMVKSVFGGSDFVQAKEAPKIFGRQLSLGGAKPRSMSINFSPKTEDDTGFSLESYEVQAIGGSNQVYGYEQGKDETLYLTDEQKPRKRGRKPANGREEALNHVEAERQRREKLNQRFYALRAVVPNISKMDKASLLADAITYITDMQKKIRVYETEKQIMKRRESNQITPAEVDYQQRHDDAVVRLSCPLETHPVSKVIQTLRENEVMPHDSNVAITEEGVVHTFTLRPQGGCTAEQLKDKLLASLSQ</sequence>
<feature type="chain" id="PRO_0000358724" description="Transcription factor bHLH3">
    <location>
        <begin position="1"/>
        <end position="467"/>
    </location>
</feature>
<feature type="domain" description="bHLH" evidence="1">
    <location>
        <begin position="316"/>
        <end position="365"/>
    </location>
</feature>
<proteinExistence type="evidence at protein level"/>
<name>BH003_ARATH</name>
<evidence type="ECO:0000255" key="1">
    <source>
        <dbReference type="PROSITE-ProRule" id="PRU00981"/>
    </source>
</evidence>
<evidence type="ECO:0000269" key="2">
    <source>
    </source>
</evidence>
<evidence type="ECO:0000305" key="3"/>
<keyword id="KW-0238">DNA-binding</keyword>
<keyword id="KW-0539">Nucleus</keyword>
<keyword id="KW-1185">Reference proteome</keyword>
<keyword id="KW-0804">Transcription</keyword>
<keyword id="KW-0805">Transcription regulation</keyword>
<reference key="1">
    <citation type="journal article" date="2003" name="Mol. Biol. Evol.">
        <title>The basic helix-loop-helix transcription factor family in plants: a genome-wide study of protein structure and functional diversity.</title>
        <authorList>
            <person name="Heim M.A."/>
            <person name="Jakoby M."/>
            <person name="Werber M."/>
            <person name="Martin C."/>
            <person name="Weisshaar B."/>
            <person name="Bailey P.C."/>
        </authorList>
    </citation>
    <scope>NUCLEOTIDE SEQUENCE [MRNA]</scope>
    <scope>INDUCTION BY UV LIGHT</scope>
    <scope>GENE FAMILY</scope>
    <scope>NOMENCLATURE</scope>
    <source>
        <strain>cv. Columbia</strain>
    </source>
</reference>
<reference key="2">
    <citation type="journal article" date="1998" name="Nature">
        <title>Analysis of 1.9 Mb of contiguous sequence from chromosome 4 of Arabidopsis thaliana.</title>
        <authorList>
            <person name="Bevan M."/>
            <person name="Bancroft I."/>
            <person name="Bent E."/>
            <person name="Love K."/>
            <person name="Goodman H.M."/>
            <person name="Dean C."/>
            <person name="Bergkamp R."/>
            <person name="Dirkse W."/>
            <person name="van Staveren M."/>
            <person name="Stiekema W."/>
            <person name="Drost L."/>
            <person name="Ridley P."/>
            <person name="Hudson S.-A."/>
            <person name="Patel K."/>
            <person name="Murphy G."/>
            <person name="Piffanelli P."/>
            <person name="Wedler H."/>
            <person name="Wedler E."/>
            <person name="Wambutt R."/>
            <person name="Weitzenegger T."/>
            <person name="Pohl T."/>
            <person name="Terryn N."/>
            <person name="Gielen J."/>
            <person name="Villarroel R."/>
            <person name="De Clercq R."/>
            <person name="van Montagu M."/>
            <person name="Lecharny A."/>
            <person name="Aubourg S."/>
            <person name="Gy I."/>
            <person name="Kreis M."/>
            <person name="Lao N."/>
            <person name="Kavanagh T."/>
            <person name="Hempel S."/>
            <person name="Kotter P."/>
            <person name="Entian K.-D."/>
            <person name="Rieger M."/>
            <person name="Schaefer M."/>
            <person name="Funk B."/>
            <person name="Mueller-Auer S."/>
            <person name="Silvey M."/>
            <person name="James R."/>
            <person name="Monfort A."/>
            <person name="Pons A."/>
            <person name="Puigdomenech P."/>
            <person name="Douka A."/>
            <person name="Voukelatou E."/>
            <person name="Milioni D."/>
            <person name="Hatzopoulos P."/>
            <person name="Piravandi E."/>
            <person name="Obermaier B."/>
            <person name="Hilbert H."/>
            <person name="Duesterhoeft A."/>
            <person name="Moores T."/>
            <person name="Jones J.D.G."/>
            <person name="Eneva T."/>
            <person name="Palme K."/>
            <person name="Benes V."/>
            <person name="Rechmann S."/>
            <person name="Ansorge W."/>
            <person name="Cooke R."/>
            <person name="Berger C."/>
            <person name="Delseny M."/>
            <person name="Voet M."/>
            <person name="Volckaert G."/>
            <person name="Mewes H.-W."/>
            <person name="Klosterman S."/>
            <person name="Schueller C."/>
            <person name="Chalwatzis N."/>
        </authorList>
    </citation>
    <scope>NUCLEOTIDE SEQUENCE [LARGE SCALE GENOMIC DNA]</scope>
    <source>
        <strain>cv. Columbia</strain>
    </source>
</reference>
<reference key="3">
    <citation type="journal article" date="1999" name="Nature">
        <title>Sequence and analysis of chromosome 4 of the plant Arabidopsis thaliana.</title>
        <authorList>
            <person name="Mayer K.F.X."/>
            <person name="Schueller C."/>
            <person name="Wambutt R."/>
            <person name="Murphy G."/>
            <person name="Volckaert G."/>
            <person name="Pohl T."/>
            <person name="Duesterhoeft A."/>
            <person name="Stiekema W."/>
            <person name="Entian K.-D."/>
            <person name="Terryn N."/>
            <person name="Harris B."/>
            <person name="Ansorge W."/>
            <person name="Brandt P."/>
            <person name="Grivell L.A."/>
            <person name="Rieger M."/>
            <person name="Weichselgartner M."/>
            <person name="de Simone V."/>
            <person name="Obermaier B."/>
            <person name="Mache R."/>
            <person name="Mueller M."/>
            <person name="Kreis M."/>
            <person name="Delseny M."/>
            <person name="Puigdomenech P."/>
            <person name="Watson M."/>
            <person name="Schmidtheini T."/>
            <person name="Reichert B."/>
            <person name="Portetelle D."/>
            <person name="Perez-Alonso M."/>
            <person name="Boutry M."/>
            <person name="Bancroft I."/>
            <person name="Vos P."/>
            <person name="Hoheisel J."/>
            <person name="Zimmermann W."/>
            <person name="Wedler H."/>
            <person name="Ridley P."/>
            <person name="Langham S.-A."/>
            <person name="McCullagh B."/>
            <person name="Bilham L."/>
            <person name="Robben J."/>
            <person name="van der Schueren J."/>
            <person name="Grymonprez B."/>
            <person name="Chuang Y.-J."/>
            <person name="Vandenbussche F."/>
            <person name="Braeken M."/>
            <person name="Weltjens I."/>
            <person name="Voet M."/>
            <person name="Bastiaens I."/>
            <person name="Aert R."/>
            <person name="Defoor E."/>
            <person name="Weitzenegger T."/>
            <person name="Bothe G."/>
            <person name="Ramsperger U."/>
            <person name="Hilbert H."/>
            <person name="Braun M."/>
            <person name="Holzer E."/>
            <person name="Brandt A."/>
            <person name="Peters S."/>
            <person name="van Staveren M."/>
            <person name="Dirkse W."/>
            <person name="Mooijman P."/>
            <person name="Klein Lankhorst R."/>
            <person name="Rose M."/>
            <person name="Hauf J."/>
            <person name="Koetter P."/>
            <person name="Berneiser S."/>
            <person name="Hempel S."/>
            <person name="Feldpausch M."/>
            <person name="Lamberth S."/>
            <person name="Van den Daele H."/>
            <person name="De Keyser A."/>
            <person name="Buysshaert C."/>
            <person name="Gielen J."/>
            <person name="Villarroel R."/>
            <person name="De Clercq R."/>
            <person name="van Montagu M."/>
            <person name="Rogers J."/>
            <person name="Cronin A."/>
            <person name="Quail M.A."/>
            <person name="Bray-Allen S."/>
            <person name="Clark L."/>
            <person name="Doggett J."/>
            <person name="Hall S."/>
            <person name="Kay M."/>
            <person name="Lennard N."/>
            <person name="McLay K."/>
            <person name="Mayes R."/>
            <person name="Pettett A."/>
            <person name="Rajandream M.A."/>
            <person name="Lyne M."/>
            <person name="Benes V."/>
            <person name="Rechmann S."/>
            <person name="Borkova D."/>
            <person name="Bloecker H."/>
            <person name="Scharfe M."/>
            <person name="Grimm M."/>
            <person name="Loehnert T.-H."/>
            <person name="Dose S."/>
            <person name="de Haan M."/>
            <person name="Maarse A.C."/>
            <person name="Schaefer M."/>
            <person name="Mueller-Auer S."/>
            <person name="Gabel C."/>
            <person name="Fuchs M."/>
            <person name="Fartmann B."/>
            <person name="Granderath K."/>
            <person name="Dauner D."/>
            <person name="Herzl A."/>
            <person name="Neumann S."/>
            <person name="Argiriou A."/>
            <person name="Vitale D."/>
            <person name="Liguori R."/>
            <person name="Piravandi E."/>
            <person name="Massenet O."/>
            <person name="Quigley F."/>
            <person name="Clabauld G."/>
            <person name="Muendlein A."/>
            <person name="Felber R."/>
            <person name="Schnabl S."/>
            <person name="Hiller R."/>
            <person name="Schmidt W."/>
            <person name="Lecharny A."/>
            <person name="Aubourg S."/>
            <person name="Chefdor F."/>
            <person name="Cooke R."/>
            <person name="Berger C."/>
            <person name="Monfort A."/>
            <person name="Casacuberta E."/>
            <person name="Gibbons T."/>
            <person name="Weber N."/>
            <person name="Vandenbol M."/>
            <person name="Bargues M."/>
            <person name="Terol J."/>
            <person name="Torres A."/>
            <person name="Perez-Perez A."/>
            <person name="Purnelle B."/>
            <person name="Bent E."/>
            <person name="Johnson S."/>
            <person name="Tacon D."/>
            <person name="Jesse T."/>
            <person name="Heijnen L."/>
            <person name="Schwarz S."/>
            <person name="Scholler P."/>
            <person name="Heber S."/>
            <person name="Francs P."/>
            <person name="Bielke C."/>
            <person name="Frishman D."/>
            <person name="Haase D."/>
            <person name="Lemcke K."/>
            <person name="Mewes H.-W."/>
            <person name="Stocker S."/>
            <person name="Zaccaria P."/>
            <person name="Bevan M."/>
            <person name="Wilson R.K."/>
            <person name="de la Bastide M."/>
            <person name="Habermann K."/>
            <person name="Parnell L."/>
            <person name="Dedhia N."/>
            <person name="Gnoj L."/>
            <person name="Schutz K."/>
            <person name="Huang E."/>
            <person name="Spiegel L."/>
            <person name="Sekhon M."/>
            <person name="Murray J."/>
            <person name="Sheet P."/>
            <person name="Cordes M."/>
            <person name="Abu-Threideh J."/>
            <person name="Stoneking T."/>
            <person name="Kalicki J."/>
            <person name="Graves T."/>
            <person name="Harmon G."/>
            <person name="Edwards J."/>
            <person name="Latreille P."/>
            <person name="Courtney L."/>
            <person name="Cloud J."/>
            <person name="Abbott A."/>
            <person name="Scott K."/>
            <person name="Johnson D."/>
            <person name="Minx P."/>
            <person name="Bentley D."/>
            <person name="Fulton B."/>
            <person name="Miller N."/>
            <person name="Greco T."/>
            <person name="Kemp K."/>
            <person name="Kramer J."/>
            <person name="Fulton L."/>
            <person name="Mardis E."/>
            <person name="Dante M."/>
            <person name="Pepin K."/>
            <person name="Hillier L.W."/>
            <person name="Nelson J."/>
            <person name="Spieth J."/>
            <person name="Ryan E."/>
            <person name="Andrews S."/>
            <person name="Geisel C."/>
            <person name="Layman D."/>
            <person name="Du H."/>
            <person name="Ali J."/>
            <person name="Berghoff A."/>
            <person name="Jones K."/>
            <person name="Drone K."/>
            <person name="Cotton M."/>
            <person name="Joshu C."/>
            <person name="Antonoiu B."/>
            <person name="Zidanic M."/>
            <person name="Strong C."/>
            <person name="Sun H."/>
            <person name="Lamar B."/>
            <person name="Yordan C."/>
            <person name="Ma P."/>
            <person name="Zhong J."/>
            <person name="Preston R."/>
            <person name="Vil D."/>
            <person name="Shekher M."/>
            <person name="Matero A."/>
            <person name="Shah R."/>
            <person name="Swaby I.K."/>
            <person name="O'Shaughnessy A."/>
            <person name="Rodriguez M."/>
            <person name="Hoffman J."/>
            <person name="Till S."/>
            <person name="Granat S."/>
            <person name="Shohdy N."/>
            <person name="Hasegawa A."/>
            <person name="Hameed A."/>
            <person name="Lodhi M."/>
            <person name="Johnson A."/>
            <person name="Chen E."/>
            <person name="Marra M.A."/>
            <person name="Martienssen R."/>
            <person name="McCombie W.R."/>
        </authorList>
    </citation>
    <scope>NUCLEOTIDE SEQUENCE [LARGE SCALE GENOMIC DNA]</scope>
    <source>
        <strain>cv. Columbia</strain>
    </source>
</reference>
<reference key="4">
    <citation type="journal article" date="2017" name="Plant J.">
        <title>Araport11: a complete reannotation of the Arabidopsis thaliana reference genome.</title>
        <authorList>
            <person name="Cheng C.Y."/>
            <person name="Krishnakumar V."/>
            <person name="Chan A.P."/>
            <person name="Thibaud-Nissen F."/>
            <person name="Schobel S."/>
            <person name="Town C.D."/>
        </authorList>
    </citation>
    <scope>GENOME REANNOTATION</scope>
    <source>
        <strain>cv. Columbia</strain>
    </source>
</reference>
<reference key="5">
    <citation type="journal article" date="2003" name="Science">
        <title>Empirical analysis of transcriptional activity in the Arabidopsis genome.</title>
        <authorList>
            <person name="Yamada K."/>
            <person name="Lim J."/>
            <person name="Dale J.M."/>
            <person name="Chen H."/>
            <person name="Shinn P."/>
            <person name="Palm C.J."/>
            <person name="Southwick A.M."/>
            <person name="Wu H.C."/>
            <person name="Kim C.J."/>
            <person name="Nguyen M."/>
            <person name="Pham P.K."/>
            <person name="Cheuk R.F."/>
            <person name="Karlin-Newmann G."/>
            <person name="Liu S.X."/>
            <person name="Lam B."/>
            <person name="Sakano H."/>
            <person name="Wu T."/>
            <person name="Yu G."/>
            <person name="Miranda M."/>
            <person name="Quach H.L."/>
            <person name="Tripp M."/>
            <person name="Chang C.H."/>
            <person name="Lee J.M."/>
            <person name="Toriumi M.J."/>
            <person name="Chan M.M."/>
            <person name="Tang C.C."/>
            <person name="Onodera C.S."/>
            <person name="Deng J.M."/>
            <person name="Akiyama K."/>
            <person name="Ansari Y."/>
            <person name="Arakawa T."/>
            <person name="Banh J."/>
            <person name="Banno F."/>
            <person name="Bowser L."/>
            <person name="Brooks S.Y."/>
            <person name="Carninci P."/>
            <person name="Chao Q."/>
            <person name="Choy N."/>
            <person name="Enju A."/>
            <person name="Goldsmith A.D."/>
            <person name="Gurjal M."/>
            <person name="Hansen N.F."/>
            <person name="Hayashizaki Y."/>
            <person name="Johnson-Hopson C."/>
            <person name="Hsuan V.W."/>
            <person name="Iida K."/>
            <person name="Karnes M."/>
            <person name="Khan S."/>
            <person name="Koesema E."/>
            <person name="Ishida J."/>
            <person name="Jiang P.X."/>
            <person name="Jones T."/>
            <person name="Kawai J."/>
            <person name="Kamiya A."/>
            <person name="Meyers C."/>
            <person name="Nakajima M."/>
            <person name="Narusaka M."/>
            <person name="Seki M."/>
            <person name="Sakurai T."/>
            <person name="Satou M."/>
            <person name="Tamse R."/>
            <person name="Vaysberg M."/>
            <person name="Wallender E.K."/>
            <person name="Wong C."/>
            <person name="Yamamura Y."/>
            <person name="Yuan S."/>
            <person name="Shinozaki K."/>
            <person name="Davis R.W."/>
            <person name="Theologis A."/>
            <person name="Ecker J.R."/>
        </authorList>
    </citation>
    <scope>NUCLEOTIDE SEQUENCE [LARGE SCALE MRNA]</scope>
    <source>
        <strain>cv. Columbia</strain>
    </source>
</reference>
<reference key="6">
    <citation type="journal article" date="2003" name="Plant Cell">
        <title>The Arabidopsis basic/helix-loop-helix transcription factor family.</title>
        <authorList>
            <person name="Toledo-Ortiz G."/>
            <person name="Huq E."/>
            <person name="Quail P.H."/>
        </authorList>
    </citation>
    <scope>GENE FAMILY</scope>
</reference>
<reference key="7">
    <citation type="journal article" date="2003" name="Plant Cell">
        <title>Update on the basic helix-loop-helix transcription factor gene family in Arabidopsis thaliana.</title>
        <authorList>
            <person name="Bailey P.C."/>
            <person name="Martin C."/>
            <person name="Toledo-Ortiz G."/>
            <person name="Quail P.H."/>
            <person name="Huq E."/>
            <person name="Heim M.A."/>
            <person name="Jakoby M."/>
            <person name="Werber M."/>
            <person name="Weisshaar B."/>
        </authorList>
    </citation>
    <scope>GENE FAMILY</scope>
    <scope>NOMENCLATURE</scope>
</reference>
<comment type="subunit">
    <text evidence="3">Homodimer.</text>
</comment>
<comment type="interaction">
    <interactant intactId="EBI-15196271">
        <id>O23487</id>
    </interactant>
    <interactant intactId="EBI-4434261">
        <id>Q9LNJ5</id>
        <label>BHLH13</label>
    </interactant>
    <organismsDiffer>false</organismsDiffer>
    <experiments>3</experiments>
</comment>
<comment type="subcellular location">
    <subcellularLocation>
        <location evidence="1">Nucleus</location>
    </subcellularLocation>
</comment>
<comment type="induction">
    <text evidence="2">By UV treatment.</text>
</comment>
<organism>
    <name type="scientific">Arabidopsis thaliana</name>
    <name type="common">Mouse-ear cress</name>
    <dbReference type="NCBI Taxonomy" id="3702"/>
    <lineage>
        <taxon>Eukaryota</taxon>
        <taxon>Viridiplantae</taxon>
        <taxon>Streptophyta</taxon>
        <taxon>Embryophyta</taxon>
        <taxon>Tracheophyta</taxon>
        <taxon>Spermatophyta</taxon>
        <taxon>Magnoliopsida</taxon>
        <taxon>eudicotyledons</taxon>
        <taxon>Gunneridae</taxon>
        <taxon>Pentapetalae</taxon>
        <taxon>rosids</taxon>
        <taxon>malvids</taxon>
        <taxon>Brassicales</taxon>
        <taxon>Brassicaceae</taxon>
        <taxon>Camelineae</taxon>
        <taxon>Arabidopsis</taxon>
    </lineage>
</organism>
<gene>
    <name type="primary">BHLH3</name>
    <name type="synonym">EN34</name>
    <name type="ordered locus">At4g16430</name>
    <name type="ORF">dl4240w</name>
    <name type="ORF">FCAALL.202</name>
</gene>
<protein>
    <recommendedName>
        <fullName>Transcription factor bHLH3</fullName>
    </recommendedName>
    <alternativeName>
        <fullName>Basic helix-loop-helix protein 3</fullName>
        <shortName>AtbHLH3</shortName>
        <shortName>bHLH 3</shortName>
    </alternativeName>
    <alternativeName>
        <fullName>Transcription factor EN 34</fullName>
    </alternativeName>
    <alternativeName>
        <fullName>bHLH transcription factor bHLH003</fullName>
    </alternativeName>
</protein>